<evidence type="ECO:0000255" key="1">
    <source>
        <dbReference type="HAMAP-Rule" id="MF_01113"/>
    </source>
</evidence>
<gene>
    <name evidence="1" type="primary">dinB</name>
    <name type="ordered locus">Sputw3181_3225</name>
</gene>
<proteinExistence type="inferred from homology"/>
<protein>
    <recommendedName>
        <fullName evidence="1">DNA polymerase IV</fullName>
        <shortName evidence="1">Pol IV</shortName>
        <ecNumber evidence="1">2.7.7.7</ecNumber>
    </recommendedName>
</protein>
<sequence>MRKIIHIDMDCYFAAVEMRDFPEYRGKPLAVGGSRERRGVISTCSYEARKFGVRSAMATSYAFKLCPNLILVPGRMQVYKEVSLHIREIFSRYTPLIEPLSLDEAYLDVSECQQYKGSATLIAEAIRRDILAETGLTASAGIAPVKFLAKVASDLNKPNGQYVITPEMLPEFVKTLSLRKIPGVGKVTAEKLTSLGLNTCGDVQVYSKQELLSRFGKLGAVLIERAHGIDGRGISIDRERKSVGVETTLAKDIYTLEQCQQVMPGLIQELALRLSRSAKDRKIHKQVVKLKFSDFKQTTIEHRTEEVSVNLFYDLLTQALARQDARGIRLVGISVGLADSTLYVASTLNTQTQLDLAL</sequence>
<accession>A1RMZ5</accession>
<organism>
    <name type="scientific">Shewanella sp. (strain W3-18-1)</name>
    <dbReference type="NCBI Taxonomy" id="351745"/>
    <lineage>
        <taxon>Bacteria</taxon>
        <taxon>Pseudomonadati</taxon>
        <taxon>Pseudomonadota</taxon>
        <taxon>Gammaproteobacteria</taxon>
        <taxon>Alteromonadales</taxon>
        <taxon>Shewanellaceae</taxon>
        <taxon>Shewanella</taxon>
    </lineage>
</organism>
<dbReference type="EC" id="2.7.7.7" evidence="1"/>
<dbReference type="EMBL" id="CP000503">
    <property type="protein sequence ID" value="ABM26040.1"/>
    <property type="molecule type" value="Genomic_DNA"/>
</dbReference>
<dbReference type="RefSeq" id="WP_011790489.1">
    <property type="nucleotide sequence ID" value="NC_008750.1"/>
</dbReference>
<dbReference type="SMR" id="A1RMZ5"/>
<dbReference type="GeneID" id="67442459"/>
<dbReference type="KEGG" id="shw:Sputw3181_3225"/>
<dbReference type="HOGENOM" id="CLU_012348_1_2_6"/>
<dbReference type="Proteomes" id="UP000002597">
    <property type="component" value="Chromosome"/>
</dbReference>
<dbReference type="GO" id="GO:0005829">
    <property type="term" value="C:cytosol"/>
    <property type="evidence" value="ECO:0007669"/>
    <property type="project" value="TreeGrafter"/>
</dbReference>
<dbReference type="GO" id="GO:0003684">
    <property type="term" value="F:damaged DNA binding"/>
    <property type="evidence" value="ECO:0007669"/>
    <property type="project" value="InterPro"/>
</dbReference>
<dbReference type="GO" id="GO:0003887">
    <property type="term" value="F:DNA-directed DNA polymerase activity"/>
    <property type="evidence" value="ECO:0007669"/>
    <property type="project" value="UniProtKB-UniRule"/>
</dbReference>
<dbReference type="GO" id="GO:0000287">
    <property type="term" value="F:magnesium ion binding"/>
    <property type="evidence" value="ECO:0007669"/>
    <property type="project" value="UniProtKB-UniRule"/>
</dbReference>
<dbReference type="GO" id="GO:0006261">
    <property type="term" value="P:DNA-templated DNA replication"/>
    <property type="evidence" value="ECO:0007669"/>
    <property type="project" value="UniProtKB-UniRule"/>
</dbReference>
<dbReference type="GO" id="GO:0042276">
    <property type="term" value="P:error-prone translesion synthesis"/>
    <property type="evidence" value="ECO:0007669"/>
    <property type="project" value="TreeGrafter"/>
</dbReference>
<dbReference type="GO" id="GO:0009432">
    <property type="term" value="P:SOS response"/>
    <property type="evidence" value="ECO:0007669"/>
    <property type="project" value="TreeGrafter"/>
</dbReference>
<dbReference type="CDD" id="cd03586">
    <property type="entry name" value="PolY_Pol_IV_kappa"/>
    <property type="match status" value="1"/>
</dbReference>
<dbReference type="FunFam" id="1.10.150.20:FF:000019">
    <property type="entry name" value="DNA polymerase IV"/>
    <property type="match status" value="1"/>
</dbReference>
<dbReference type="FunFam" id="3.30.70.270:FF:000002">
    <property type="entry name" value="DNA polymerase IV"/>
    <property type="match status" value="1"/>
</dbReference>
<dbReference type="FunFam" id="3.40.1170.60:FF:000001">
    <property type="entry name" value="DNA polymerase IV"/>
    <property type="match status" value="1"/>
</dbReference>
<dbReference type="Gene3D" id="3.30.70.270">
    <property type="match status" value="1"/>
</dbReference>
<dbReference type="Gene3D" id="3.40.1170.60">
    <property type="match status" value="1"/>
</dbReference>
<dbReference type="Gene3D" id="1.10.150.20">
    <property type="entry name" value="5' to 3' exonuclease, C-terminal subdomain"/>
    <property type="match status" value="1"/>
</dbReference>
<dbReference type="Gene3D" id="3.30.1490.100">
    <property type="entry name" value="DNA polymerase, Y-family, little finger domain"/>
    <property type="match status" value="1"/>
</dbReference>
<dbReference type="HAMAP" id="MF_01113">
    <property type="entry name" value="DNApol_IV"/>
    <property type="match status" value="1"/>
</dbReference>
<dbReference type="InterPro" id="IPR043502">
    <property type="entry name" value="DNA/RNA_pol_sf"/>
</dbReference>
<dbReference type="InterPro" id="IPR036775">
    <property type="entry name" value="DNA_pol_Y-fam_lit_finger_sf"/>
</dbReference>
<dbReference type="InterPro" id="IPR017961">
    <property type="entry name" value="DNA_pol_Y-fam_little_finger"/>
</dbReference>
<dbReference type="InterPro" id="IPR050116">
    <property type="entry name" value="DNA_polymerase-Y"/>
</dbReference>
<dbReference type="InterPro" id="IPR022880">
    <property type="entry name" value="DNApol_IV"/>
</dbReference>
<dbReference type="InterPro" id="IPR053848">
    <property type="entry name" value="IMS_HHH_1"/>
</dbReference>
<dbReference type="InterPro" id="IPR043128">
    <property type="entry name" value="Rev_trsase/Diguanyl_cyclase"/>
</dbReference>
<dbReference type="InterPro" id="IPR001126">
    <property type="entry name" value="UmuC"/>
</dbReference>
<dbReference type="NCBIfam" id="NF002677">
    <property type="entry name" value="PRK02406.1"/>
    <property type="match status" value="1"/>
</dbReference>
<dbReference type="PANTHER" id="PTHR11076:SF33">
    <property type="entry name" value="DNA POLYMERASE KAPPA"/>
    <property type="match status" value="1"/>
</dbReference>
<dbReference type="PANTHER" id="PTHR11076">
    <property type="entry name" value="DNA REPAIR POLYMERASE UMUC / TRANSFERASE FAMILY MEMBER"/>
    <property type="match status" value="1"/>
</dbReference>
<dbReference type="Pfam" id="PF00817">
    <property type="entry name" value="IMS"/>
    <property type="match status" value="1"/>
</dbReference>
<dbReference type="Pfam" id="PF11799">
    <property type="entry name" value="IMS_C"/>
    <property type="match status" value="1"/>
</dbReference>
<dbReference type="Pfam" id="PF21999">
    <property type="entry name" value="IMS_HHH_1"/>
    <property type="match status" value="1"/>
</dbReference>
<dbReference type="SUPFAM" id="SSF56672">
    <property type="entry name" value="DNA/RNA polymerases"/>
    <property type="match status" value="1"/>
</dbReference>
<dbReference type="SUPFAM" id="SSF100879">
    <property type="entry name" value="Lesion bypass DNA polymerase (Y-family), little finger domain"/>
    <property type="match status" value="1"/>
</dbReference>
<dbReference type="PROSITE" id="PS50173">
    <property type="entry name" value="UMUC"/>
    <property type="match status" value="1"/>
</dbReference>
<comment type="function">
    <text evidence="1">Poorly processive, error-prone DNA polymerase involved in untargeted mutagenesis. Copies undamaged DNA at stalled replication forks, which arise in vivo from mismatched or misaligned primer ends. These misaligned primers can be extended by PolIV. Exhibits no 3'-5' exonuclease (proofreading) activity. May be involved in translesional synthesis, in conjunction with the beta clamp from PolIII.</text>
</comment>
<comment type="catalytic activity">
    <reaction evidence="1">
        <text>DNA(n) + a 2'-deoxyribonucleoside 5'-triphosphate = DNA(n+1) + diphosphate</text>
        <dbReference type="Rhea" id="RHEA:22508"/>
        <dbReference type="Rhea" id="RHEA-COMP:17339"/>
        <dbReference type="Rhea" id="RHEA-COMP:17340"/>
        <dbReference type="ChEBI" id="CHEBI:33019"/>
        <dbReference type="ChEBI" id="CHEBI:61560"/>
        <dbReference type="ChEBI" id="CHEBI:173112"/>
        <dbReference type="EC" id="2.7.7.7"/>
    </reaction>
</comment>
<comment type="cofactor">
    <cofactor evidence="1">
        <name>Mg(2+)</name>
        <dbReference type="ChEBI" id="CHEBI:18420"/>
    </cofactor>
    <text evidence="1">Binds 2 magnesium ions per subunit.</text>
</comment>
<comment type="subunit">
    <text evidence="1">Monomer.</text>
</comment>
<comment type="subcellular location">
    <subcellularLocation>
        <location evidence="1">Cytoplasm</location>
    </subcellularLocation>
</comment>
<comment type="similarity">
    <text evidence="1">Belongs to the DNA polymerase type-Y family.</text>
</comment>
<reference key="1">
    <citation type="submission" date="2006-12" db="EMBL/GenBank/DDBJ databases">
        <title>Complete sequence of Shewanella sp. W3-18-1.</title>
        <authorList>
            <consortium name="US DOE Joint Genome Institute"/>
            <person name="Copeland A."/>
            <person name="Lucas S."/>
            <person name="Lapidus A."/>
            <person name="Barry K."/>
            <person name="Detter J.C."/>
            <person name="Glavina del Rio T."/>
            <person name="Hammon N."/>
            <person name="Israni S."/>
            <person name="Dalin E."/>
            <person name="Tice H."/>
            <person name="Pitluck S."/>
            <person name="Chain P."/>
            <person name="Malfatti S."/>
            <person name="Shin M."/>
            <person name="Vergez L."/>
            <person name="Schmutz J."/>
            <person name="Larimer F."/>
            <person name="Land M."/>
            <person name="Hauser L."/>
            <person name="Kyrpides N."/>
            <person name="Lykidis A."/>
            <person name="Tiedje J."/>
            <person name="Richardson P."/>
        </authorList>
    </citation>
    <scope>NUCLEOTIDE SEQUENCE [LARGE SCALE GENOMIC DNA]</scope>
    <source>
        <strain>W3-18-1</strain>
    </source>
</reference>
<feature type="chain" id="PRO_1000084939" description="DNA polymerase IV">
    <location>
        <begin position="1"/>
        <end position="358"/>
    </location>
</feature>
<feature type="domain" description="UmuC" evidence="1">
    <location>
        <begin position="4"/>
        <end position="185"/>
    </location>
</feature>
<feature type="active site" evidence="1">
    <location>
        <position position="104"/>
    </location>
</feature>
<feature type="binding site" evidence="1">
    <location>
        <position position="8"/>
    </location>
    <ligand>
        <name>Mg(2+)</name>
        <dbReference type="ChEBI" id="CHEBI:18420"/>
    </ligand>
</feature>
<feature type="binding site" evidence="1">
    <location>
        <position position="103"/>
    </location>
    <ligand>
        <name>Mg(2+)</name>
        <dbReference type="ChEBI" id="CHEBI:18420"/>
    </ligand>
</feature>
<feature type="site" description="Substrate discrimination" evidence="1">
    <location>
        <position position="13"/>
    </location>
</feature>
<keyword id="KW-0963">Cytoplasm</keyword>
<keyword id="KW-0227">DNA damage</keyword>
<keyword id="KW-0234">DNA repair</keyword>
<keyword id="KW-0235">DNA replication</keyword>
<keyword id="KW-0238">DNA-binding</keyword>
<keyword id="KW-0239">DNA-directed DNA polymerase</keyword>
<keyword id="KW-0460">Magnesium</keyword>
<keyword id="KW-0479">Metal-binding</keyword>
<keyword id="KW-0515">Mutator protein</keyword>
<keyword id="KW-0548">Nucleotidyltransferase</keyword>
<keyword id="KW-0808">Transferase</keyword>
<name>DPO4_SHESW</name>